<gene>
    <name evidence="1" type="primary">caiC</name>
    <name type="ordered locus">BWG_0035</name>
</gene>
<evidence type="ECO:0000255" key="1">
    <source>
        <dbReference type="HAMAP-Rule" id="MF_01524"/>
    </source>
</evidence>
<evidence type="ECO:0000305" key="2"/>
<organism>
    <name type="scientific">Escherichia coli (strain K12 / MC4100 / BW2952)</name>
    <dbReference type="NCBI Taxonomy" id="595496"/>
    <lineage>
        <taxon>Bacteria</taxon>
        <taxon>Pseudomonadati</taxon>
        <taxon>Pseudomonadota</taxon>
        <taxon>Gammaproteobacteria</taxon>
        <taxon>Enterobacterales</taxon>
        <taxon>Enterobacteriaceae</taxon>
        <taxon>Escherichia</taxon>
    </lineage>
</organism>
<dbReference type="EC" id="6.2.1.48" evidence="1"/>
<dbReference type="EMBL" id="CP001396">
    <property type="protein sequence ID" value="ACR64209.1"/>
    <property type="status" value="ALT_INIT"/>
    <property type="molecule type" value="Genomic_DNA"/>
</dbReference>
<dbReference type="RefSeq" id="WP_001350478.1">
    <property type="nucleotide sequence ID" value="NC_012759.1"/>
</dbReference>
<dbReference type="SMR" id="C4ZPW3"/>
<dbReference type="KEGG" id="ebw:BWG_0035"/>
<dbReference type="HOGENOM" id="CLU_000022_59_0_6"/>
<dbReference type="UniPathway" id="UPA00117"/>
<dbReference type="GO" id="GO:0051108">
    <property type="term" value="F:carnitine-CoA ligase activity"/>
    <property type="evidence" value="ECO:0007669"/>
    <property type="project" value="InterPro"/>
</dbReference>
<dbReference type="GO" id="GO:0051109">
    <property type="term" value="F:crotonobetaine-CoA ligase activity"/>
    <property type="evidence" value="ECO:0007669"/>
    <property type="project" value="InterPro"/>
</dbReference>
<dbReference type="GO" id="GO:0031956">
    <property type="term" value="F:medium-chain fatty acid-CoA ligase activity"/>
    <property type="evidence" value="ECO:0007669"/>
    <property type="project" value="TreeGrafter"/>
</dbReference>
<dbReference type="GO" id="GO:0009437">
    <property type="term" value="P:carnitine metabolic process"/>
    <property type="evidence" value="ECO:0007669"/>
    <property type="project" value="UniProtKB-UniRule"/>
</dbReference>
<dbReference type="GO" id="GO:0006631">
    <property type="term" value="P:fatty acid metabolic process"/>
    <property type="evidence" value="ECO:0007669"/>
    <property type="project" value="TreeGrafter"/>
</dbReference>
<dbReference type="CDD" id="cd05934">
    <property type="entry name" value="FACL_DitJ_like"/>
    <property type="match status" value="1"/>
</dbReference>
<dbReference type="FunFam" id="3.30.300.30:FF:000011">
    <property type="entry name" value="Crotonobetaine/carnitine--CoA ligase"/>
    <property type="match status" value="1"/>
</dbReference>
<dbReference type="FunFam" id="3.40.50.12780:FF:000017">
    <property type="entry name" value="Crotonobetaine/carnitine--CoA ligase"/>
    <property type="match status" value="1"/>
</dbReference>
<dbReference type="Gene3D" id="3.30.300.30">
    <property type="match status" value="1"/>
</dbReference>
<dbReference type="Gene3D" id="3.40.50.12780">
    <property type="entry name" value="N-terminal domain of ligase-like"/>
    <property type="match status" value="1"/>
</dbReference>
<dbReference type="HAMAP" id="MF_01524">
    <property type="entry name" value="CaiC"/>
    <property type="match status" value="1"/>
</dbReference>
<dbReference type="InterPro" id="IPR025110">
    <property type="entry name" value="AMP-bd_C"/>
</dbReference>
<dbReference type="InterPro" id="IPR045851">
    <property type="entry name" value="AMP-bd_C_sf"/>
</dbReference>
<dbReference type="InterPro" id="IPR020845">
    <property type="entry name" value="AMP-binding_CS"/>
</dbReference>
<dbReference type="InterPro" id="IPR000873">
    <property type="entry name" value="AMP-dep_synth/lig_dom"/>
</dbReference>
<dbReference type="InterPro" id="IPR042099">
    <property type="entry name" value="ANL_N_sf"/>
</dbReference>
<dbReference type="InterPro" id="IPR023456">
    <property type="entry name" value="CaiC"/>
</dbReference>
<dbReference type="NCBIfam" id="NF005947">
    <property type="entry name" value="PRK08008.1"/>
    <property type="match status" value="1"/>
</dbReference>
<dbReference type="PANTHER" id="PTHR43201">
    <property type="entry name" value="ACYL-COA SYNTHETASE"/>
    <property type="match status" value="1"/>
</dbReference>
<dbReference type="PANTHER" id="PTHR43201:SF5">
    <property type="entry name" value="MEDIUM-CHAIN ACYL-COA LIGASE ACSF2, MITOCHONDRIAL"/>
    <property type="match status" value="1"/>
</dbReference>
<dbReference type="Pfam" id="PF00501">
    <property type="entry name" value="AMP-binding"/>
    <property type="match status" value="1"/>
</dbReference>
<dbReference type="Pfam" id="PF13193">
    <property type="entry name" value="AMP-binding_C"/>
    <property type="match status" value="1"/>
</dbReference>
<dbReference type="SUPFAM" id="SSF56801">
    <property type="entry name" value="Acetyl-CoA synthetase-like"/>
    <property type="match status" value="1"/>
</dbReference>
<dbReference type="PROSITE" id="PS00455">
    <property type="entry name" value="AMP_BINDING"/>
    <property type="match status" value="1"/>
</dbReference>
<comment type="function">
    <text evidence="1">Catalyzes the transfer of CoA to carnitine, generating the initial carnitinyl-CoA needed for the CaiB reaction cycle. Also has activity toward crotonobetaine and gamma-butyrobetaine.</text>
</comment>
<comment type="catalytic activity">
    <reaction evidence="1">
        <text>4-(trimethylamino)butanoate + ATP + CoA = 4-(trimethylamino)butanoyl-CoA + AMP + diphosphate</text>
        <dbReference type="Rhea" id="RHEA:55960"/>
        <dbReference type="ChEBI" id="CHEBI:16244"/>
        <dbReference type="ChEBI" id="CHEBI:30616"/>
        <dbReference type="ChEBI" id="CHEBI:33019"/>
        <dbReference type="ChEBI" id="CHEBI:57287"/>
        <dbReference type="ChEBI" id="CHEBI:61513"/>
        <dbReference type="ChEBI" id="CHEBI:456215"/>
        <dbReference type="EC" id="6.2.1.48"/>
    </reaction>
</comment>
<comment type="catalytic activity">
    <reaction evidence="1">
        <text>crotonobetaine + ATP + CoA = crotonobetainyl-CoA + AMP + diphosphate</text>
        <dbReference type="Rhea" id="RHEA:30079"/>
        <dbReference type="ChEBI" id="CHEBI:17237"/>
        <dbReference type="ChEBI" id="CHEBI:30616"/>
        <dbReference type="ChEBI" id="CHEBI:33019"/>
        <dbReference type="ChEBI" id="CHEBI:57287"/>
        <dbReference type="ChEBI" id="CHEBI:60933"/>
        <dbReference type="ChEBI" id="CHEBI:456215"/>
        <dbReference type="EC" id="6.2.1.48"/>
    </reaction>
</comment>
<comment type="catalytic activity">
    <reaction evidence="1">
        <text>(R)-carnitine + ATP + CoA = (R)-carnitinyl-CoA + AMP + diphosphate</text>
        <dbReference type="Rhea" id="RHEA:28514"/>
        <dbReference type="ChEBI" id="CHEBI:16347"/>
        <dbReference type="ChEBI" id="CHEBI:30616"/>
        <dbReference type="ChEBI" id="CHEBI:33019"/>
        <dbReference type="ChEBI" id="CHEBI:57287"/>
        <dbReference type="ChEBI" id="CHEBI:60932"/>
        <dbReference type="ChEBI" id="CHEBI:456215"/>
        <dbReference type="EC" id="6.2.1.48"/>
    </reaction>
</comment>
<comment type="pathway">
    <text evidence="1">Amine and polyamine metabolism; carnitine metabolism.</text>
</comment>
<comment type="similarity">
    <text evidence="1">Belongs to the ATP-dependent AMP-binding enzyme family.</text>
</comment>
<comment type="sequence caution" evidence="2">
    <conflict type="erroneous initiation">
        <sequence resource="EMBL-CDS" id="ACR64209"/>
    </conflict>
</comment>
<reference key="1">
    <citation type="journal article" date="2009" name="J. Bacteriol.">
        <title>Genomic sequencing reveals regulatory mutations and recombinational events in the widely used MC4100 lineage of Escherichia coli K-12.</title>
        <authorList>
            <person name="Ferenci T."/>
            <person name="Zhou Z."/>
            <person name="Betteridge T."/>
            <person name="Ren Y."/>
            <person name="Liu Y."/>
            <person name="Feng L."/>
            <person name="Reeves P.R."/>
            <person name="Wang L."/>
        </authorList>
    </citation>
    <scope>NUCLEOTIDE SEQUENCE [LARGE SCALE GENOMIC DNA]</scope>
    <source>
        <strain>K12 / MC4100 / BW2952</strain>
    </source>
</reference>
<sequence>MDIIGGQHLRQMWDDLADVYGHKTALICESSGGVVNRYSYLELNQEINRTANLFYTLGIRKGDKVALHLDNCPEFIFCWFGLAKIGAIMVPINARLLCEESAWILQNSQACLLVTSAQFYPMYQQIQQEDATQLRHICLTDVALPADDGVSSFTQLKNQQPATLCYAPPLSTDDTAEILFTSGTTSRPKGVVITHYNLRFAGYYSAWQCALRDDDVYLTVMPAFHIDCQCTAAMAAFSAGATFVLVEKYSARAFWGQVQKYRATVTECIPMMIRTLMVQPPSANDQQHRLREVMFYLNLSEQEKDAFCERFGVRLLTSYGMTETIVGIIGDRPGDKRRWPSIGRVGFCYEAEIRDDHNRPLPAGEIGEICIKGIPGKTIFKEYFLNPQATAKVLEADGWLHTGDTGYRDEEDFFYFVDRRCNMIKRGGENVSCVELENIIAAHPKIQDIVVVGIKDSIRDEAIKAFVVLNEGETLSEEEFFRFCEQNMAKFKVPSYLEIRKDLPRNCSGKIIRKNLK</sequence>
<name>CAIC_ECOBW</name>
<proteinExistence type="inferred from homology"/>
<accession>C4ZPW3</accession>
<keyword id="KW-0436">Ligase</keyword>
<feature type="chain" id="PRO_0000383395" description="Crotonobetaine/carnitine--CoA ligase">
    <location>
        <begin position="1"/>
        <end position="517"/>
    </location>
</feature>
<protein>
    <recommendedName>
        <fullName evidence="1">Crotonobetaine/carnitine--CoA ligase</fullName>
        <ecNumber evidence="1">6.2.1.48</ecNumber>
    </recommendedName>
</protein>